<evidence type="ECO:0000250" key="1"/>
<evidence type="ECO:0000255" key="2">
    <source>
        <dbReference type="PROSITE-ProRule" id="PRU00042"/>
    </source>
</evidence>
<evidence type="ECO:0000255" key="3">
    <source>
        <dbReference type="PROSITE-ProRule" id="PRU00119"/>
    </source>
</evidence>
<evidence type="ECO:0000269" key="4">
    <source>
    </source>
</evidence>
<evidence type="ECO:0000303" key="5">
    <source>
    </source>
</evidence>
<evidence type="ECO:0000303" key="6">
    <source>
    </source>
</evidence>
<evidence type="ECO:0000305" key="7"/>
<organism>
    <name type="scientific">Homo sapiens</name>
    <name type="common">Human</name>
    <dbReference type="NCBI Taxonomy" id="9606"/>
    <lineage>
        <taxon>Eukaryota</taxon>
        <taxon>Metazoa</taxon>
        <taxon>Chordata</taxon>
        <taxon>Craniata</taxon>
        <taxon>Vertebrata</taxon>
        <taxon>Euteleostomi</taxon>
        <taxon>Mammalia</taxon>
        <taxon>Eutheria</taxon>
        <taxon>Euarchontoglires</taxon>
        <taxon>Primates</taxon>
        <taxon>Haplorrhini</taxon>
        <taxon>Catarrhini</taxon>
        <taxon>Hominidae</taxon>
        <taxon>Homo</taxon>
    </lineage>
</organism>
<gene>
    <name type="primary">ZNF772</name>
</gene>
<dbReference type="EMBL" id="AK294941">
    <property type="protein sequence ID" value="BAG58017.1"/>
    <property type="molecule type" value="mRNA"/>
</dbReference>
<dbReference type="EMBL" id="AK302574">
    <property type="protein sequence ID" value="BAG63832.1"/>
    <property type="molecule type" value="mRNA"/>
</dbReference>
<dbReference type="EMBL" id="BX647068">
    <property type="status" value="NOT_ANNOTATED_CDS"/>
    <property type="molecule type" value="mRNA"/>
</dbReference>
<dbReference type="EMBL" id="CR749225">
    <property type="protein sequence ID" value="CAH18081.1"/>
    <property type="molecule type" value="mRNA"/>
</dbReference>
<dbReference type="EMBL" id="AC003005">
    <property type="status" value="NOT_ANNOTATED_CDS"/>
    <property type="molecule type" value="Genomic_DNA"/>
</dbReference>
<dbReference type="EMBL" id="AC004076">
    <property type="status" value="NOT_ANNOTATED_CDS"/>
    <property type="molecule type" value="Genomic_DNA"/>
</dbReference>
<dbReference type="CCDS" id="CCDS33133.1">
    <molecule id="Q68DY9-1"/>
</dbReference>
<dbReference type="CCDS" id="CCDS46210.1">
    <molecule id="Q68DY9-3"/>
</dbReference>
<dbReference type="CCDS" id="CCDS82406.1">
    <molecule id="Q68DY9-2"/>
</dbReference>
<dbReference type="RefSeq" id="NP_001019767.1">
    <molecule id="Q68DY9-1"/>
    <property type="nucleotide sequence ID" value="NM_001024596.3"/>
</dbReference>
<dbReference type="RefSeq" id="NP_001137540.1">
    <molecule id="Q68DY9-3"/>
    <property type="nucleotide sequence ID" value="NM_001144068.2"/>
</dbReference>
<dbReference type="RefSeq" id="NP_001317542.1">
    <molecule id="Q68DY9-2"/>
    <property type="nucleotide sequence ID" value="NM_001330613.2"/>
</dbReference>
<dbReference type="RefSeq" id="XP_005259001.1">
    <molecule id="Q68DY9-2"/>
    <property type="nucleotide sequence ID" value="XM_005258944.5"/>
</dbReference>
<dbReference type="SMR" id="Q68DY9"/>
<dbReference type="BioGRID" id="134722">
    <property type="interactions" value="8"/>
</dbReference>
<dbReference type="FunCoup" id="Q68DY9">
    <property type="interactions" value="5"/>
</dbReference>
<dbReference type="IntAct" id="Q68DY9">
    <property type="interactions" value="14"/>
</dbReference>
<dbReference type="STRING" id="9606.ENSP00000341165"/>
<dbReference type="iPTMnet" id="Q68DY9"/>
<dbReference type="PhosphoSitePlus" id="Q68DY9"/>
<dbReference type="BioMuta" id="ZNF772"/>
<dbReference type="DMDM" id="119368827"/>
<dbReference type="jPOST" id="Q68DY9"/>
<dbReference type="MassIVE" id="Q68DY9"/>
<dbReference type="PaxDb" id="9606-ENSP00000341165"/>
<dbReference type="PeptideAtlas" id="Q68DY9"/>
<dbReference type="ProteomicsDB" id="66119">
    <molecule id="Q68DY9-1"/>
</dbReference>
<dbReference type="ProteomicsDB" id="66120">
    <molecule id="Q68DY9-2"/>
</dbReference>
<dbReference type="ProteomicsDB" id="66121">
    <molecule id="Q68DY9-3"/>
</dbReference>
<dbReference type="Pumba" id="Q68DY9"/>
<dbReference type="Antibodypedia" id="33253">
    <property type="antibodies" value="87 antibodies from 12 providers"/>
</dbReference>
<dbReference type="DNASU" id="400720"/>
<dbReference type="Ensembl" id="ENST00000343280.8">
    <molecule id="Q68DY9-1"/>
    <property type="protein sequence ID" value="ENSP00000341165.4"/>
    <property type="gene ID" value="ENSG00000197128.13"/>
</dbReference>
<dbReference type="Ensembl" id="ENST00000356584.8">
    <molecule id="Q68DY9-3"/>
    <property type="protein sequence ID" value="ENSP00000348992.3"/>
    <property type="gene ID" value="ENSG00000197128.13"/>
</dbReference>
<dbReference type="Ensembl" id="ENST00000427512.6">
    <molecule id="Q68DY9-2"/>
    <property type="protein sequence ID" value="ENSP00000395967.2"/>
    <property type="gene ID" value="ENSG00000197128.13"/>
</dbReference>
<dbReference type="GeneID" id="400720"/>
<dbReference type="KEGG" id="hsa:400720"/>
<dbReference type="MANE-Select" id="ENST00000356584.8">
    <molecule id="Q68DY9-3"/>
    <property type="protein sequence ID" value="ENSP00000348992.3"/>
    <property type="RefSeq nucleotide sequence ID" value="NM_001144068.2"/>
    <property type="RefSeq protein sequence ID" value="NP_001137540.1"/>
</dbReference>
<dbReference type="UCSC" id="uc002qot.3">
    <molecule id="Q68DY9-1"/>
    <property type="organism name" value="human"/>
</dbReference>
<dbReference type="AGR" id="HGNC:33106"/>
<dbReference type="CTD" id="400720"/>
<dbReference type="DisGeNET" id="400720"/>
<dbReference type="GeneCards" id="ZNF772"/>
<dbReference type="HGNC" id="HGNC:33106">
    <property type="gene designation" value="ZNF772"/>
</dbReference>
<dbReference type="HPA" id="ENSG00000197128">
    <property type="expression patterns" value="Low tissue specificity"/>
</dbReference>
<dbReference type="MalaCards" id="ZNF772"/>
<dbReference type="neXtProt" id="NX_Q68DY9"/>
<dbReference type="OpenTargets" id="ENSG00000197128"/>
<dbReference type="PharmGKB" id="PA162410356"/>
<dbReference type="VEuPathDB" id="HostDB:ENSG00000197128"/>
<dbReference type="eggNOG" id="KOG1721">
    <property type="taxonomic scope" value="Eukaryota"/>
</dbReference>
<dbReference type="GeneTree" id="ENSGT00940000154734"/>
<dbReference type="HOGENOM" id="CLU_002678_57_1_1"/>
<dbReference type="InParanoid" id="Q68DY9"/>
<dbReference type="OMA" id="RLIKHWG"/>
<dbReference type="OrthoDB" id="40579at2759"/>
<dbReference type="PAN-GO" id="Q68DY9">
    <property type="GO annotations" value="4 GO annotations based on evolutionary models"/>
</dbReference>
<dbReference type="PhylomeDB" id="Q68DY9"/>
<dbReference type="TreeFam" id="TF342033"/>
<dbReference type="PathwayCommons" id="Q68DY9"/>
<dbReference type="Reactome" id="R-HSA-212436">
    <property type="pathway name" value="Generic Transcription Pathway"/>
</dbReference>
<dbReference type="SignaLink" id="Q68DY9"/>
<dbReference type="BioGRID-ORCS" id="400720">
    <property type="hits" value="8 hits in 1173 CRISPR screens"/>
</dbReference>
<dbReference type="ChiTaRS" id="ZNF772">
    <property type="organism name" value="human"/>
</dbReference>
<dbReference type="GenomeRNAi" id="400720"/>
<dbReference type="Pharos" id="Q68DY9">
    <property type="development level" value="Tdark"/>
</dbReference>
<dbReference type="PRO" id="PR:Q68DY9"/>
<dbReference type="Proteomes" id="UP000005640">
    <property type="component" value="Chromosome 19"/>
</dbReference>
<dbReference type="RNAct" id="Q68DY9">
    <property type="molecule type" value="protein"/>
</dbReference>
<dbReference type="Bgee" id="ENSG00000197128">
    <property type="expression patterns" value="Expressed in corpus callosum and 111 other cell types or tissues"/>
</dbReference>
<dbReference type="ExpressionAtlas" id="Q68DY9">
    <property type="expression patterns" value="baseline and differential"/>
</dbReference>
<dbReference type="GO" id="GO:0005634">
    <property type="term" value="C:nucleus"/>
    <property type="evidence" value="ECO:0000318"/>
    <property type="project" value="GO_Central"/>
</dbReference>
<dbReference type="GO" id="GO:0000981">
    <property type="term" value="F:DNA-binding transcription factor activity, RNA polymerase II-specific"/>
    <property type="evidence" value="ECO:0000318"/>
    <property type="project" value="GO_Central"/>
</dbReference>
<dbReference type="GO" id="GO:0000978">
    <property type="term" value="F:RNA polymerase II cis-regulatory region sequence-specific DNA binding"/>
    <property type="evidence" value="ECO:0000318"/>
    <property type="project" value="GO_Central"/>
</dbReference>
<dbReference type="GO" id="GO:0008270">
    <property type="term" value="F:zinc ion binding"/>
    <property type="evidence" value="ECO:0007669"/>
    <property type="project" value="UniProtKB-KW"/>
</dbReference>
<dbReference type="GO" id="GO:0006357">
    <property type="term" value="P:regulation of transcription by RNA polymerase II"/>
    <property type="evidence" value="ECO:0000318"/>
    <property type="project" value="GO_Central"/>
</dbReference>
<dbReference type="CDD" id="cd07765">
    <property type="entry name" value="KRAB_A-box"/>
    <property type="match status" value="1"/>
</dbReference>
<dbReference type="FunFam" id="3.30.160.60:FF:001478">
    <property type="entry name" value="Zinc finger protein 134"/>
    <property type="match status" value="2"/>
</dbReference>
<dbReference type="FunFam" id="3.30.160.60:FF:001556">
    <property type="entry name" value="Zinc finger protein 154"/>
    <property type="match status" value="1"/>
</dbReference>
<dbReference type="FunFam" id="3.30.160.60:FF:000135">
    <property type="entry name" value="Zinc finger protein 358"/>
    <property type="match status" value="1"/>
</dbReference>
<dbReference type="FunFam" id="3.30.160.60:FF:000016">
    <property type="entry name" value="zinc finger protein 37 homolog"/>
    <property type="match status" value="1"/>
</dbReference>
<dbReference type="FunFam" id="3.30.160.60:FF:000281">
    <property type="entry name" value="Zinc finger protein 558 isoform X1"/>
    <property type="match status" value="1"/>
</dbReference>
<dbReference type="FunFam" id="3.30.160.60:FF:002863">
    <property type="entry name" value="Zinc finger protein 671"/>
    <property type="match status" value="1"/>
</dbReference>
<dbReference type="FunFam" id="3.30.160.60:FF:002916">
    <property type="entry name" value="zinc finger protein 772 isoform X1"/>
    <property type="match status" value="1"/>
</dbReference>
<dbReference type="FunFam" id="3.30.160.60:FF:000320">
    <property type="entry name" value="Zinc finger protein 777"/>
    <property type="match status" value="1"/>
</dbReference>
<dbReference type="Gene3D" id="6.10.140.140">
    <property type="match status" value="1"/>
</dbReference>
<dbReference type="Gene3D" id="3.30.160.60">
    <property type="entry name" value="Classic Zinc Finger"/>
    <property type="match status" value="10"/>
</dbReference>
<dbReference type="InterPro" id="IPR050589">
    <property type="entry name" value="Ikaros_C2H2-ZF"/>
</dbReference>
<dbReference type="InterPro" id="IPR001909">
    <property type="entry name" value="KRAB"/>
</dbReference>
<dbReference type="InterPro" id="IPR036051">
    <property type="entry name" value="KRAB_dom_sf"/>
</dbReference>
<dbReference type="InterPro" id="IPR036236">
    <property type="entry name" value="Znf_C2H2_sf"/>
</dbReference>
<dbReference type="InterPro" id="IPR013087">
    <property type="entry name" value="Znf_C2H2_type"/>
</dbReference>
<dbReference type="PANTHER" id="PTHR24404:SF114">
    <property type="entry name" value="KLUMPFUSS, ISOFORM B-RELATED"/>
    <property type="match status" value="1"/>
</dbReference>
<dbReference type="PANTHER" id="PTHR24404">
    <property type="entry name" value="ZINC FINGER PROTEIN"/>
    <property type="match status" value="1"/>
</dbReference>
<dbReference type="Pfam" id="PF01352">
    <property type="entry name" value="KRAB"/>
    <property type="match status" value="1"/>
</dbReference>
<dbReference type="Pfam" id="PF00096">
    <property type="entry name" value="zf-C2H2"/>
    <property type="match status" value="8"/>
</dbReference>
<dbReference type="SMART" id="SM00349">
    <property type="entry name" value="KRAB"/>
    <property type="match status" value="1"/>
</dbReference>
<dbReference type="SMART" id="SM00355">
    <property type="entry name" value="ZnF_C2H2"/>
    <property type="match status" value="10"/>
</dbReference>
<dbReference type="SUPFAM" id="SSF57667">
    <property type="entry name" value="beta-beta-alpha zinc fingers"/>
    <property type="match status" value="5"/>
</dbReference>
<dbReference type="SUPFAM" id="SSF109640">
    <property type="entry name" value="KRAB domain (Kruppel-associated box)"/>
    <property type="match status" value="1"/>
</dbReference>
<dbReference type="PROSITE" id="PS50805">
    <property type="entry name" value="KRAB"/>
    <property type="match status" value="1"/>
</dbReference>
<dbReference type="PROSITE" id="PS00028">
    <property type="entry name" value="ZINC_FINGER_C2H2_1"/>
    <property type="match status" value="10"/>
</dbReference>
<dbReference type="PROSITE" id="PS50157">
    <property type="entry name" value="ZINC_FINGER_C2H2_2"/>
    <property type="match status" value="10"/>
</dbReference>
<sequence>MAAAEPMGPAQVPMNSEVIVDPIQGQVNFEDVFVYFSQEEWVLLDEAQRLLYRDVMLENFALMASLGHTSFMSHIVASLVMGSEPWVPDWVDMTLAVATETPGGSDPGCWHGMEDEEIPFEQSFSIGMSQIRIPKGGPSTQKAYPCGTCGLVLKDILHLAEHQETHPGQKPYMCVLCGKQFCFSANLHQHQKQHSGEKPFRSDKSRPFLLNNCAVQSMEMSFVTGEACKDFLASSSIFEHHAPHNEWKPHSNTKCEEASHCGKRHYKCSECGKTFSRKDSLVQHQRVHTGERPYECGECGKTFSRKPILAQHQRIHTGEMPYECGICGKVFNHSSNLIVHQRVHTGARPYKCSECGKAYSHKSTLVQHESIHTGERPYECSECGKYFGHKYRLIKHWSVHTGARPYECIACGKFFSQSSDLIAHQRVHNGEKPYVCSECGKAFSHKHVLVQHHRIHTGERPYKCSECGKAFRQRASLIRHWKIHTGERP</sequence>
<comment type="function">
    <text evidence="1">May be involved in transcriptional regulation.</text>
</comment>
<comment type="interaction">
    <interactant intactId="EBI-10249148">
        <id>Q68DY9</id>
    </interactant>
    <interactant intactId="EBI-16439278">
        <id>Q6FHY5</id>
        <label>MEOX2</label>
    </interactant>
    <organismsDiffer>false</organismsDiffer>
    <experiments>3</experiments>
</comment>
<comment type="interaction">
    <interactant intactId="EBI-10249148">
        <id>Q68DY9</id>
    </interactant>
    <interactant intactId="EBI-597835">
        <id>P50542</id>
        <label>PEX5</label>
    </interactant>
    <organismsDiffer>false</organismsDiffer>
    <experiments>3</experiments>
</comment>
<comment type="subcellular location">
    <subcellularLocation>
        <location evidence="7">Nucleus</location>
    </subcellularLocation>
</comment>
<comment type="alternative products">
    <event type="alternative splicing"/>
    <isoform>
        <id>Q68DY9-1</id>
        <name>1</name>
        <sequence type="displayed"/>
    </isoform>
    <isoform>
        <id>Q68DY9-2</id>
        <name>2</name>
        <sequence type="described" ref="VSP_021882"/>
    </isoform>
    <isoform>
        <id>Q68DY9-3</id>
        <name>3</name>
        <sequence type="described" ref="VSP_043423"/>
    </isoform>
</comment>
<comment type="similarity">
    <text evidence="7">Belongs to the krueppel C2H2-type zinc-finger protein family.</text>
</comment>
<protein>
    <recommendedName>
        <fullName>Zinc finger protein 772</fullName>
    </recommendedName>
</protein>
<name>ZN772_HUMAN</name>
<keyword id="KW-0025">Alternative splicing</keyword>
<keyword id="KW-0238">DNA-binding</keyword>
<keyword id="KW-0479">Metal-binding</keyword>
<keyword id="KW-0539">Nucleus</keyword>
<keyword id="KW-1267">Proteomics identification</keyword>
<keyword id="KW-1185">Reference proteome</keyword>
<keyword id="KW-0677">Repeat</keyword>
<keyword id="KW-0804">Transcription</keyword>
<keyword id="KW-0805">Transcription regulation</keyword>
<keyword id="KW-0862">Zinc</keyword>
<keyword id="KW-0863">Zinc-finger</keyword>
<reference key="1">
    <citation type="journal article" date="2004" name="Nat. Genet.">
        <title>Complete sequencing and characterization of 21,243 full-length human cDNAs.</title>
        <authorList>
            <person name="Ota T."/>
            <person name="Suzuki Y."/>
            <person name="Nishikawa T."/>
            <person name="Otsuki T."/>
            <person name="Sugiyama T."/>
            <person name="Irie R."/>
            <person name="Wakamatsu A."/>
            <person name="Hayashi K."/>
            <person name="Sato H."/>
            <person name="Nagai K."/>
            <person name="Kimura K."/>
            <person name="Makita H."/>
            <person name="Sekine M."/>
            <person name="Obayashi M."/>
            <person name="Nishi T."/>
            <person name="Shibahara T."/>
            <person name="Tanaka T."/>
            <person name="Ishii S."/>
            <person name="Yamamoto J."/>
            <person name="Saito K."/>
            <person name="Kawai Y."/>
            <person name="Isono Y."/>
            <person name="Nakamura Y."/>
            <person name="Nagahari K."/>
            <person name="Murakami K."/>
            <person name="Yasuda T."/>
            <person name="Iwayanagi T."/>
            <person name="Wagatsuma M."/>
            <person name="Shiratori A."/>
            <person name="Sudo H."/>
            <person name="Hosoiri T."/>
            <person name="Kaku Y."/>
            <person name="Kodaira H."/>
            <person name="Kondo H."/>
            <person name="Sugawara M."/>
            <person name="Takahashi M."/>
            <person name="Kanda K."/>
            <person name="Yokoi T."/>
            <person name="Furuya T."/>
            <person name="Kikkawa E."/>
            <person name="Omura Y."/>
            <person name="Abe K."/>
            <person name="Kamihara K."/>
            <person name="Katsuta N."/>
            <person name="Sato K."/>
            <person name="Tanikawa M."/>
            <person name="Yamazaki M."/>
            <person name="Ninomiya K."/>
            <person name="Ishibashi T."/>
            <person name="Yamashita H."/>
            <person name="Murakawa K."/>
            <person name="Fujimori K."/>
            <person name="Tanai H."/>
            <person name="Kimata M."/>
            <person name="Watanabe M."/>
            <person name="Hiraoka S."/>
            <person name="Chiba Y."/>
            <person name="Ishida S."/>
            <person name="Ono Y."/>
            <person name="Takiguchi S."/>
            <person name="Watanabe S."/>
            <person name="Yosida M."/>
            <person name="Hotuta T."/>
            <person name="Kusano J."/>
            <person name="Kanehori K."/>
            <person name="Takahashi-Fujii A."/>
            <person name="Hara H."/>
            <person name="Tanase T.-O."/>
            <person name="Nomura Y."/>
            <person name="Togiya S."/>
            <person name="Komai F."/>
            <person name="Hara R."/>
            <person name="Takeuchi K."/>
            <person name="Arita M."/>
            <person name="Imose N."/>
            <person name="Musashino K."/>
            <person name="Yuuki H."/>
            <person name="Oshima A."/>
            <person name="Sasaki N."/>
            <person name="Aotsuka S."/>
            <person name="Yoshikawa Y."/>
            <person name="Matsunawa H."/>
            <person name="Ichihara T."/>
            <person name="Shiohata N."/>
            <person name="Sano S."/>
            <person name="Moriya S."/>
            <person name="Momiyama H."/>
            <person name="Satoh N."/>
            <person name="Takami S."/>
            <person name="Terashima Y."/>
            <person name="Suzuki O."/>
            <person name="Nakagawa S."/>
            <person name="Senoh A."/>
            <person name="Mizoguchi H."/>
            <person name="Goto Y."/>
            <person name="Shimizu F."/>
            <person name="Wakebe H."/>
            <person name="Hishigaki H."/>
            <person name="Watanabe T."/>
            <person name="Sugiyama A."/>
            <person name="Takemoto M."/>
            <person name="Kawakami B."/>
            <person name="Yamazaki M."/>
            <person name="Watanabe K."/>
            <person name="Kumagai A."/>
            <person name="Itakura S."/>
            <person name="Fukuzumi Y."/>
            <person name="Fujimori Y."/>
            <person name="Komiyama M."/>
            <person name="Tashiro H."/>
            <person name="Tanigami A."/>
            <person name="Fujiwara T."/>
            <person name="Ono T."/>
            <person name="Yamada K."/>
            <person name="Fujii Y."/>
            <person name="Ozaki K."/>
            <person name="Hirao M."/>
            <person name="Ohmori Y."/>
            <person name="Kawabata A."/>
            <person name="Hikiji T."/>
            <person name="Kobatake N."/>
            <person name="Inagaki H."/>
            <person name="Ikema Y."/>
            <person name="Okamoto S."/>
            <person name="Okitani R."/>
            <person name="Kawakami T."/>
            <person name="Noguchi S."/>
            <person name="Itoh T."/>
            <person name="Shigeta K."/>
            <person name="Senba T."/>
            <person name="Matsumura K."/>
            <person name="Nakajima Y."/>
            <person name="Mizuno T."/>
            <person name="Morinaga M."/>
            <person name="Sasaki M."/>
            <person name="Togashi T."/>
            <person name="Oyama M."/>
            <person name="Hata H."/>
            <person name="Watanabe M."/>
            <person name="Komatsu T."/>
            <person name="Mizushima-Sugano J."/>
            <person name="Satoh T."/>
            <person name="Shirai Y."/>
            <person name="Takahashi Y."/>
            <person name="Nakagawa K."/>
            <person name="Okumura K."/>
            <person name="Nagase T."/>
            <person name="Nomura N."/>
            <person name="Kikuchi H."/>
            <person name="Masuho Y."/>
            <person name="Yamashita R."/>
            <person name="Nakai K."/>
            <person name="Yada T."/>
            <person name="Nakamura Y."/>
            <person name="Ohara O."/>
            <person name="Isogai T."/>
            <person name="Sugano S."/>
        </authorList>
    </citation>
    <scope>NUCLEOTIDE SEQUENCE [LARGE SCALE MRNA] (ISOFORMS 2 AND 3)</scope>
    <source>
        <tissue>Brain</tissue>
        <tissue>Testis</tissue>
    </source>
</reference>
<reference key="2">
    <citation type="journal article" date="2007" name="BMC Genomics">
        <title>The full-ORF clone resource of the German cDNA consortium.</title>
        <authorList>
            <person name="Bechtel S."/>
            <person name="Rosenfelder H."/>
            <person name="Duda A."/>
            <person name="Schmidt C.P."/>
            <person name="Ernst U."/>
            <person name="Wellenreuther R."/>
            <person name="Mehrle A."/>
            <person name="Schuster C."/>
            <person name="Bahr A."/>
            <person name="Bloecker H."/>
            <person name="Heubner D."/>
            <person name="Hoerlein A."/>
            <person name="Michel G."/>
            <person name="Wedler H."/>
            <person name="Koehrer K."/>
            <person name="Ottenwaelder B."/>
            <person name="Poustka A."/>
            <person name="Wiemann S."/>
            <person name="Schupp I."/>
        </authorList>
    </citation>
    <scope>NUCLEOTIDE SEQUENCE [LARGE SCALE MRNA] (ISOFORMS 1 AND 2)</scope>
    <scope>VARIANTS TRP-182 AND LEU-218</scope>
    <source>
        <tissue>Endometrial tumor</tissue>
        <tissue>Fetal kidney</tissue>
    </source>
</reference>
<reference key="3">
    <citation type="journal article" date="2004" name="Nature">
        <title>The DNA sequence and biology of human chromosome 19.</title>
        <authorList>
            <person name="Grimwood J."/>
            <person name="Gordon L.A."/>
            <person name="Olsen A.S."/>
            <person name="Terry A."/>
            <person name="Schmutz J."/>
            <person name="Lamerdin J.E."/>
            <person name="Hellsten U."/>
            <person name="Goodstein D."/>
            <person name="Couronne O."/>
            <person name="Tran-Gyamfi M."/>
            <person name="Aerts A."/>
            <person name="Altherr M."/>
            <person name="Ashworth L."/>
            <person name="Bajorek E."/>
            <person name="Black S."/>
            <person name="Branscomb E."/>
            <person name="Caenepeel S."/>
            <person name="Carrano A.V."/>
            <person name="Caoile C."/>
            <person name="Chan Y.M."/>
            <person name="Christensen M."/>
            <person name="Cleland C.A."/>
            <person name="Copeland A."/>
            <person name="Dalin E."/>
            <person name="Dehal P."/>
            <person name="Denys M."/>
            <person name="Detter J.C."/>
            <person name="Escobar J."/>
            <person name="Flowers D."/>
            <person name="Fotopulos D."/>
            <person name="Garcia C."/>
            <person name="Georgescu A.M."/>
            <person name="Glavina T."/>
            <person name="Gomez M."/>
            <person name="Gonzales E."/>
            <person name="Groza M."/>
            <person name="Hammon N."/>
            <person name="Hawkins T."/>
            <person name="Haydu L."/>
            <person name="Ho I."/>
            <person name="Huang W."/>
            <person name="Israni S."/>
            <person name="Jett J."/>
            <person name="Kadner K."/>
            <person name="Kimball H."/>
            <person name="Kobayashi A."/>
            <person name="Larionov V."/>
            <person name="Leem S.-H."/>
            <person name="Lopez F."/>
            <person name="Lou Y."/>
            <person name="Lowry S."/>
            <person name="Malfatti S."/>
            <person name="Martinez D."/>
            <person name="McCready P.M."/>
            <person name="Medina C."/>
            <person name="Morgan J."/>
            <person name="Nelson K."/>
            <person name="Nolan M."/>
            <person name="Ovcharenko I."/>
            <person name="Pitluck S."/>
            <person name="Pollard M."/>
            <person name="Popkie A.P."/>
            <person name="Predki P."/>
            <person name="Quan G."/>
            <person name="Ramirez L."/>
            <person name="Rash S."/>
            <person name="Retterer J."/>
            <person name="Rodriguez A."/>
            <person name="Rogers S."/>
            <person name="Salamov A."/>
            <person name="Salazar A."/>
            <person name="She X."/>
            <person name="Smith D."/>
            <person name="Slezak T."/>
            <person name="Solovyev V."/>
            <person name="Thayer N."/>
            <person name="Tice H."/>
            <person name="Tsai M."/>
            <person name="Ustaszewska A."/>
            <person name="Vo N."/>
            <person name="Wagner M."/>
            <person name="Wheeler J."/>
            <person name="Wu K."/>
            <person name="Xie G."/>
            <person name="Yang J."/>
            <person name="Dubchak I."/>
            <person name="Furey T.S."/>
            <person name="DeJong P."/>
            <person name="Dickson M."/>
            <person name="Gordon D."/>
            <person name="Eichler E.E."/>
            <person name="Pennacchio L.A."/>
            <person name="Richardson P."/>
            <person name="Stubbs L."/>
            <person name="Rokhsar D.S."/>
            <person name="Myers R.M."/>
            <person name="Rubin E.M."/>
            <person name="Lucas S.M."/>
        </authorList>
    </citation>
    <scope>NUCLEOTIDE SEQUENCE [LARGE SCALE GENOMIC DNA]</scope>
</reference>
<feature type="chain" id="PRO_0000263689" description="Zinc finger protein 772">
    <location>
        <begin position="1"/>
        <end position="489"/>
    </location>
</feature>
<feature type="domain" description="KRAB" evidence="3">
    <location>
        <begin position="27"/>
        <end position="98"/>
    </location>
</feature>
<feature type="zinc finger region" description="C2H2-type 1" evidence="2">
    <location>
        <begin position="144"/>
        <end position="166"/>
    </location>
</feature>
<feature type="zinc finger region" description="C2H2-type 2" evidence="2">
    <location>
        <begin position="172"/>
        <end position="194"/>
    </location>
</feature>
<feature type="zinc finger region" description="C2H2-type 3" evidence="2">
    <location>
        <begin position="266"/>
        <end position="288"/>
    </location>
</feature>
<feature type="zinc finger region" description="C2H2-type 4" evidence="2">
    <location>
        <begin position="294"/>
        <end position="316"/>
    </location>
</feature>
<feature type="zinc finger region" description="C2H2-type 5" evidence="2">
    <location>
        <begin position="322"/>
        <end position="344"/>
    </location>
</feature>
<feature type="zinc finger region" description="C2H2-type 6" evidence="2">
    <location>
        <begin position="350"/>
        <end position="372"/>
    </location>
</feature>
<feature type="zinc finger region" description="C2H2-type 7" evidence="2">
    <location>
        <begin position="378"/>
        <end position="400"/>
    </location>
</feature>
<feature type="zinc finger region" description="C2H2-type 8" evidence="2">
    <location>
        <begin position="406"/>
        <end position="428"/>
    </location>
</feature>
<feature type="zinc finger region" description="C2H2-type 9" evidence="2">
    <location>
        <begin position="434"/>
        <end position="456"/>
    </location>
</feature>
<feature type="zinc finger region" description="C2H2-type 10" evidence="2">
    <location>
        <begin position="462"/>
        <end position="484"/>
    </location>
</feature>
<feature type="splice variant" id="VSP_021882" description="In isoform 2." evidence="5 6">
    <location>
        <begin position="1"/>
        <end position="112"/>
    </location>
</feature>
<feature type="splice variant" id="VSP_043423" description="In isoform 3." evidence="5">
    <location>
        <begin position="67"/>
        <end position="107"/>
    </location>
</feature>
<feature type="sequence variant" id="VAR_029604" description="In dbSNP:rs2074060." evidence="4">
    <original>C</original>
    <variation>W</variation>
    <location>
        <position position="182"/>
    </location>
</feature>
<feature type="sequence variant" id="VAR_029605" description="In dbSNP:rs2074059." evidence="4">
    <original>M</original>
    <variation>L</variation>
    <location>
        <position position="218"/>
    </location>
</feature>
<feature type="sequence conflict" description="In Ref. 2; CAH18081." evidence="7" ref="2">
    <original>E</original>
    <variation>G</variation>
    <location>
        <position position="369"/>
    </location>
</feature>
<accession>Q68DY9</accession>
<accession>A6NJK9</accession>
<accession>B4DH56</accession>
<accession>B4DYS0</accession>
<proteinExistence type="evidence at protein level"/>